<name>HSLU_XANCB</name>
<accession>B0RNK7</accession>
<evidence type="ECO:0000255" key="1">
    <source>
        <dbReference type="HAMAP-Rule" id="MF_00249"/>
    </source>
</evidence>
<protein>
    <recommendedName>
        <fullName evidence="1">ATP-dependent protease ATPase subunit HslU</fullName>
    </recommendedName>
    <alternativeName>
        <fullName evidence="1">Unfoldase HslU</fullName>
    </alternativeName>
</protein>
<dbReference type="EMBL" id="AM920689">
    <property type="protein sequence ID" value="CAP50042.1"/>
    <property type="molecule type" value="Genomic_DNA"/>
</dbReference>
<dbReference type="SMR" id="B0RNK7"/>
<dbReference type="KEGG" id="xca:xcc-b100_0703"/>
<dbReference type="HOGENOM" id="CLU_033123_0_0_6"/>
<dbReference type="Proteomes" id="UP000001188">
    <property type="component" value="Chromosome"/>
</dbReference>
<dbReference type="GO" id="GO:0009376">
    <property type="term" value="C:HslUV protease complex"/>
    <property type="evidence" value="ECO:0007669"/>
    <property type="project" value="UniProtKB-UniRule"/>
</dbReference>
<dbReference type="GO" id="GO:0005524">
    <property type="term" value="F:ATP binding"/>
    <property type="evidence" value="ECO:0007669"/>
    <property type="project" value="UniProtKB-UniRule"/>
</dbReference>
<dbReference type="GO" id="GO:0016887">
    <property type="term" value="F:ATP hydrolysis activity"/>
    <property type="evidence" value="ECO:0007669"/>
    <property type="project" value="InterPro"/>
</dbReference>
<dbReference type="GO" id="GO:0008233">
    <property type="term" value="F:peptidase activity"/>
    <property type="evidence" value="ECO:0007669"/>
    <property type="project" value="InterPro"/>
</dbReference>
<dbReference type="GO" id="GO:0036402">
    <property type="term" value="F:proteasome-activating activity"/>
    <property type="evidence" value="ECO:0007669"/>
    <property type="project" value="UniProtKB-UniRule"/>
</dbReference>
<dbReference type="GO" id="GO:0043335">
    <property type="term" value="P:protein unfolding"/>
    <property type="evidence" value="ECO:0007669"/>
    <property type="project" value="UniProtKB-UniRule"/>
</dbReference>
<dbReference type="GO" id="GO:0051603">
    <property type="term" value="P:proteolysis involved in protein catabolic process"/>
    <property type="evidence" value="ECO:0007669"/>
    <property type="project" value="TreeGrafter"/>
</dbReference>
<dbReference type="CDD" id="cd19498">
    <property type="entry name" value="RecA-like_HslU"/>
    <property type="match status" value="1"/>
</dbReference>
<dbReference type="FunFam" id="3.40.50.300:FF:000213">
    <property type="entry name" value="ATP-dependent protease ATPase subunit HslU"/>
    <property type="match status" value="1"/>
</dbReference>
<dbReference type="FunFam" id="3.40.50.300:FF:000220">
    <property type="entry name" value="ATP-dependent protease ATPase subunit HslU"/>
    <property type="match status" value="1"/>
</dbReference>
<dbReference type="Gene3D" id="1.10.8.60">
    <property type="match status" value="1"/>
</dbReference>
<dbReference type="Gene3D" id="1.10.8.10">
    <property type="entry name" value="DNA helicase RuvA subunit, C-terminal domain"/>
    <property type="match status" value="2"/>
</dbReference>
<dbReference type="Gene3D" id="3.40.50.300">
    <property type="entry name" value="P-loop containing nucleotide triphosphate hydrolases"/>
    <property type="match status" value="2"/>
</dbReference>
<dbReference type="HAMAP" id="MF_00249">
    <property type="entry name" value="HslU"/>
    <property type="match status" value="1"/>
</dbReference>
<dbReference type="InterPro" id="IPR003593">
    <property type="entry name" value="AAA+_ATPase"/>
</dbReference>
<dbReference type="InterPro" id="IPR050052">
    <property type="entry name" value="ATP-dep_Clp_protease_ClpX"/>
</dbReference>
<dbReference type="InterPro" id="IPR003959">
    <property type="entry name" value="ATPase_AAA_core"/>
</dbReference>
<dbReference type="InterPro" id="IPR019489">
    <property type="entry name" value="Clp_ATPase_C"/>
</dbReference>
<dbReference type="InterPro" id="IPR004491">
    <property type="entry name" value="HslU"/>
</dbReference>
<dbReference type="InterPro" id="IPR027417">
    <property type="entry name" value="P-loop_NTPase"/>
</dbReference>
<dbReference type="NCBIfam" id="TIGR00390">
    <property type="entry name" value="hslU"/>
    <property type="match status" value="1"/>
</dbReference>
<dbReference type="NCBIfam" id="NF003544">
    <property type="entry name" value="PRK05201.1"/>
    <property type="match status" value="1"/>
</dbReference>
<dbReference type="PANTHER" id="PTHR48102">
    <property type="entry name" value="ATP-DEPENDENT CLP PROTEASE ATP-BINDING SUBUNIT CLPX-LIKE, MITOCHONDRIAL-RELATED"/>
    <property type="match status" value="1"/>
</dbReference>
<dbReference type="PANTHER" id="PTHR48102:SF3">
    <property type="entry name" value="ATP-DEPENDENT PROTEASE ATPASE SUBUNIT HSLU"/>
    <property type="match status" value="1"/>
</dbReference>
<dbReference type="Pfam" id="PF00004">
    <property type="entry name" value="AAA"/>
    <property type="match status" value="1"/>
</dbReference>
<dbReference type="Pfam" id="PF07724">
    <property type="entry name" value="AAA_2"/>
    <property type="match status" value="1"/>
</dbReference>
<dbReference type="SMART" id="SM00382">
    <property type="entry name" value="AAA"/>
    <property type="match status" value="1"/>
</dbReference>
<dbReference type="SMART" id="SM01086">
    <property type="entry name" value="ClpB_D2-small"/>
    <property type="match status" value="1"/>
</dbReference>
<dbReference type="SUPFAM" id="SSF52540">
    <property type="entry name" value="P-loop containing nucleoside triphosphate hydrolases"/>
    <property type="match status" value="1"/>
</dbReference>
<organism>
    <name type="scientific">Xanthomonas campestris pv. campestris (strain B100)</name>
    <dbReference type="NCBI Taxonomy" id="509169"/>
    <lineage>
        <taxon>Bacteria</taxon>
        <taxon>Pseudomonadati</taxon>
        <taxon>Pseudomonadota</taxon>
        <taxon>Gammaproteobacteria</taxon>
        <taxon>Lysobacterales</taxon>
        <taxon>Lysobacteraceae</taxon>
        <taxon>Xanthomonas</taxon>
    </lineage>
</organism>
<keyword id="KW-0067">ATP-binding</keyword>
<keyword id="KW-0143">Chaperone</keyword>
<keyword id="KW-0963">Cytoplasm</keyword>
<keyword id="KW-0547">Nucleotide-binding</keyword>
<reference key="1">
    <citation type="journal article" date="2008" name="J. Biotechnol.">
        <title>The genome of Xanthomonas campestris pv. campestris B100 and its use for the reconstruction of metabolic pathways involved in xanthan biosynthesis.</title>
        <authorList>
            <person name="Vorhoelter F.-J."/>
            <person name="Schneiker S."/>
            <person name="Goesmann A."/>
            <person name="Krause L."/>
            <person name="Bekel T."/>
            <person name="Kaiser O."/>
            <person name="Linke B."/>
            <person name="Patschkowski T."/>
            <person name="Rueckert C."/>
            <person name="Schmid J."/>
            <person name="Sidhu V.K."/>
            <person name="Sieber V."/>
            <person name="Tauch A."/>
            <person name="Watt S.A."/>
            <person name="Weisshaar B."/>
            <person name="Becker A."/>
            <person name="Niehaus K."/>
            <person name="Puehler A."/>
        </authorList>
    </citation>
    <scope>NUCLEOTIDE SEQUENCE [LARGE SCALE GENOMIC DNA]</scope>
    <source>
        <strain>B100</strain>
    </source>
</reference>
<feature type="chain" id="PRO_1000100981" description="ATP-dependent protease ATPase subunit HslU">
    <location>
        <begin position="1"/>
        <end position="455"/>
    </location>
</feature>
<feature type="binding site" evidence="1">
    <location>
        <position position="23"/>
    </location>
    <ligand>
        <name>ATP</name>
        <dbReference type="ChEBI" id="CHEBI:30616"/>
    </ligand>
</feature>
<feature type="binding site" evidence="1">
    <location>
        <begin position="65"/>
        <end position="70"/>
    </location>
    <ligand>
        <name>ATP</name>
        <dbReference type="ChEBI" id="CHEBI:30616"/>
    </ligand>
</feature>
<feature type="binding site" evidence="1">
    <location>
        <position position="266"/>
    </location>
    <ligand>
        <name>ATP</name>
        <dbReference type="ChEBI" id="CHEBI:30616"/>
    </ligand>
</feature>
<feature type="binding site" evidence="1">
    <location>
        <position position="333"/>
    </location>
    <ligand>
        <name>ATP</name>
        <dbReference type="ChEBI" id="CHEBI:30616"/>
    </ligand>
</feature>
<feature type="binding site" evidence="1">
    <location>
        <position position="405"/>
    </location>
    <ligand>
        <name>ATP</name>
        <dbReference type="ChEBI" id="CHEBI:30616"/>
    </ligand>
</feature>
<sequence length="455" mass="50690">MPNIDTATMTPREIVQELDRHIVGQHDAKRAVAIALRNRWRRMQLPEELRNEVMPKNILMIGPTGVGKTEIARRLATLANAPFVKVEATRFTEVGYVGKDVEQIIRDLADTSVKLYREQAKVRVRNQAEERAEDRILDALLPRRSAGIGFDPEAARHEPSAQDNETRIKFRRMLRNGELDEREIELEVAVNASMDIMTPPGMEEMGQQLRQMFSNLGGGKSQKRKLTIKAARPLLIEEEAGKLVNEDDIRTAAIEACEQHGIVFIDEIDKVAKRGEAGSSGGDVSREGVQRDLLPLVEGSNVSTKYGTVKTDHILFIASGAFHLAKPSDLIPELQGRFPIRVELTALTKADFVRILTEPKAALIKQYEALLQTEGVALTFGADAVDRLAEIAAQVNERQENIGARRLHTVLERLLDVLSYEAPDRDGQSVTVDAAYVDAQLGELVQDPDLSRYIL</sequence>
<comment type="function">
    <text evidence="1">ATPase subunit of a proteasome-like degradation complex; this subunit has chaperone activity. The binding of ATP and its subsequent hydrolysis by HslU are essential for unfolding of protein substrates subsequently hydrolyzed by HslV. HslU recognizes the N-terminal part of its protein substrates and unfolds these before they are guided to HslV for hydrolysis.</text>
</comment>
<comment type="subunit">
    <text evidence="1">A double ring-shaped homohexamer of HslV is capped on each side by a ring-shaped HslU homohexamer. The assembly of the HslU/HslV complex is dependent on binding of ATP.</text>
</comment>
<comment type="subcellular location">
    <subcellularLocation>
        <location evidence="1">Cytoplasm</location>
    </subcellularLocation>
</comment>
<comment type="similarity">
    <text evidence="1">Belongs to the ClpX chaperone family. HslU subfamily.</text>
</comment>
<gene>
    <name evidence="1" type="primary">hslU</name>
    <name type="ordered locus">xcc-b100_0703</name>
</gene>
<proteinExistence type="inferred from homology"/>